<sequence>MGQTKSKIKSKYASYLSFIKILLKRGGVKVSTKNLIKLFQIIEQFCPWFPEQGTSDLKDWKRIGKELKQAGRKGNIIPLTVWNDWAIIKAALEPFQTEEDSISVSDAPGSCLIDCNENTRKKSQKETESLHCEYVAEPVMAQSTQNVDYNQLQEVIYPETLKLEGKGPELMGPSESKPRGTSPLPAGQVLVRLQPQKQVKENKTQPQVAYQYWPLAELQYRPPPESQYGYPGMPPAPQGRAPYHQPPTRRLNPMAPPSRQGSELHEIIDKSRKEGDTEAWQFPVTLEPMPPGEGAQEGEPPTVEARYKSFSIKMLKDMKEGVKQYGPNSPYMRTLLDSIAYGHRLIPYDWEILAKSSLSPSQFLQFKTWWIDGVQEQVRRNRAANPPVNIDADQLLGIGQNWSTISQQALMQNEAIEQVRAICLRAWEKIQDPGSTCPSFNTVRQGSKEPYPDFVARLQDVAQKSIADEKAGKVIVELMAYENANPECQSAIKPLKGKVPAGSDVISEYVKACDGIGGAMHKAMLMAQAITGVVLGGQVRTFGGKCYNCGQIGHLKKNCPVLNKQNITIQATTTGREPPDLCPRCKKGKHWASQCRSKFDKNGQPLSGNEQRGQPQAPQQTGAFPIQPFVPQGFQGQQPPLSQVFQGISQLPQYNNCPSPQAAVQQ</sequence>
<name>GAK10_HUMAN</name>
<proteinExistence type="evidence at protein level"/>
<evidence type="ECO:0000250" key="1"/>
<evidence type="ECO:0000255" key="2"/>
<evidence type="ECO:0000255" key="3">
    <source>
        <dbReference type="PROSITE-ProRule" id="PRU00047"/>
    </source>
</evidence>
<evidence type="ECO:0000256" key="4">
    <source>
        <dbReference type="SAM" id="MobiDB-lite"/>
    </source>
</evidence>
<evidence type="ECO:0000305" key="5"/>
<gene>
    <name type="primary">ERVK-10</name>
</gene>
<organism>
    <name type="scientific">Homo sapiens</name>
    <name type="common">Human</name>
    <dbReference type="NCBI Taxonomy" id="9606"/>
    <lineage>
        <taxon>Eukaryota</taxon>
        <taxon>Metazoa</taxon>
        <taxon>Chordata</taxon>
        <taxon>Craniata</taxon>
        <taxon>Vertebrata</taxon>
        <taxon>Euteleostomi</taxon>
        <taxon>Mammalia</taxon>
        <taxon>Eutheria</taxon>
        <taxon>Euarchontoglires</taxon>
        <taxon>Primates</taxon>
        <taxon>Haplorrhini</taxon>
        <taxon>Catarrhini</taxon>
        <taxon>Hominidae</taxon>
        <taxon>Homo</taxon>
    </lineage>
</organism>
<dbReference type="EMBL" id="M14123">
    <property type="protein sequence ID" value="AAA88030.1"/>
    <property type="status" value="ALT_SEQ"/>
    <property type="molecule type" value="Genomic_DNA"/>
</dbReference>
<dbReference type="EMBL" id="M14123">
    <property type="protein sequence ID" value="AAA88031.1"/>
    <property type="status" value="ALT_SEQ"/>
    <property type="molecule type" value="Genomic_DNA"/>
</dbReference>
<dbReference type="EMBL" id="Y10390">
    <property type="protein sequence ID" value="CAA71416.1"/>
    <property type="molecule type" value="Genomic_DNA"/>
</dbReference>
<dbReference type="EMBL" id="AF164613">
    <property type="protein sequence ID" value="AAD51796.1"/>
    <property type="status" value="ALT_SEQ"/>
    <property type="molecule type" value="Genomic_DNA"/>
</dbReference>
<dbReference type="EMBL" id="X72791">
    <property type="protein sequence ID" value="CAA51306.1"/>
    <property type="molecule type" value="mRNA"/>
</dbReference>
<dbReference type="EMBL" id="AC016577">
    <property type="status" value="NOT_ANNOTATED_CDS"/>
    <property type="molecule type" value="Genomic_DNA"/>
</dbReference>
<dbReference type="PIR" id="A24483">
    <property type="entry name" value="FOHUE1"/>
</dbReference>
<dbReference type="PIR" id="B24483">
    <property type="entry name" value="FOHUE2"/>
</dbReference>
<dbReference type="SMR" id="P87889"/>
<dbReference type="BioMuta" id="HGNC:39004"/>
<dbReference type="DMDM" id="134035263"/>
<dbReference type="MassIVE" id="P87889"/>
<dbReference type="PeptideAtlas" id="P87889"/>
<dbReference type="GeneCards" id="ERVK-10"/>
<dbReference type="HGNC" id="HGNC:39004">
    <property type="gene designation" value="ERVK-10"/>
</dbReference>
<dbReference type="neXtProt" id="NX_P87889"/>
<dbReference type="PhylomeDB" id="P87889"/>
<dbReference type="Pharos" id="P87889">
    <property type="development level" value="Tdark"/>
</dbReference>
<dbReference type="Proteomes" id="UP000005640">
    <property type="component" value="Unplaced"/>
</dbReference>
<dbReference type="GO" id="GO:0005886">
    <property type="term" value="C:plasma membrane"/>
    <property type="evidence" value="ECO:0007669"/>
    <property type="project" value="UniProtKB-SubCell"/>
</dbReference>
<dbReference type="GO" id="GO:0003676">
    <property type="term" value="F:nucleic acid binding"/>
    <property type="evidence" value="ECO:0007669"/>
    <property type="project" value="InterPro"/>
</dbReference>
<dbReference type="GO" id="GO:0005198">
    <property type="term" value="F:structural molecule activity"/>
    <property type="evidence" value="ECO:0007669"/>
    <property type="project" value="InterPro"/>
</dbReference>
<dbReference type="GO" id="GO:0008270">
    <property type="term" value="F:zinc ion binding"/>
    <property type="evidence" value="ECO:0007669"/>
    <property type="project" value="UniProtKB-KW"/>
</dbReference>
<dbReference type="GO" id="GO:0075523">
    <property type="term" value="P:viral translational frameshifting"/>
    <property type="evidence" value="ECO:0007669"/>
    <property type="project" value="UniProtKB-KW"/>
</dbReference>
<dbReference type="Gene3D" id="1.10.1200.30">
    <property type="match status" value="1"/>
</dbReference>
<dbReference type="Gene3D" id="1.10.375.10">
    <property type="entry name" value="Human Immunodeficiency Virus Type 1 Capsid Protein"/>
    <property type="match status" value="1"/>
</dbReference>
<dbReference type="Gene3D" id="1.10.150.490">
    <property type="entry name" value="Retroviral GAG p10 protein"/>
    <property type="match status" value="1"/>
</dbReference>
<dbReference type="Gene3D" id="4.10.60.10">
    <property type="entry name" value="Zinc finger, CCHC-type"/>
    <property type="match status" value="1"/>
</dbReference>
<dbReference type="InterPro" id="IPR003322">
    <property type="entry name" value="B_retro_matrix"/>
</dbReference>
<dbReference type="InterPro" id="IPR038124">
    <property type="entry name" value="B_retro_matrix_sf"/>
</dbReference>
<dbReference type="InterPro" id="IPR045345">
    <property type="entry name" value="Gag_p24_C"/>
</dbReference>
<dbReference type="InterPro" id="IPR050195">
    <property type="entry name" value="Primate_lentivir_Gag_pol-like"/>
</dbReference>
<dbReference type="InterPro" id="IPR008916">
    <property type="entry name" value="Retrov_capsid_C"/>
</dbReference>
<dbReference type="InterPro" id="IPR008919">
    <property type="entry name" value="Retrov_capsid_N"/>
</dbReference>
<dbReference type="InterPro" id="IPR010999">
    <property type="entry name" value="Retrovr_matrix"/>
</dbReference>
<dbReference type="InterPro" id="IPR001878">
    <property type="entry name" value="Znf_CCHC"/>
</dbReference>
<dbReference type="InterPro" id="IPR036875">
    <property type="entry name" value="Znf_CCHC_sf"/>
</dbReference>
<dbReference type="PANTHER" id="PTHR40389">
    <property type="entry name" value="ENDOGENOUS RETROVIRUS GROUP K MEMBER 24 GAG POLYPROTEIN-RELATED"/>
    <property type="match status" value="1"/>
</dbReference>
<dbReference type="PANTHER" id="PTHR40389:SF2">
    <property type="entry name" value="ENDOGENOUS RETROVIRUS GROUP K MEMBER 24 GAG POLYPROTEIN-RELATED"/>
    <property type="match status" value="1"/>
</dbReference>
<dbReference type="Pfam" id="PF02337">
    <property type="entry name" value="Gag_p10"/>
    <property type="match status" value="1"/>
</dbReference>
<dbReference type="Pfam" id="PF00607">
    <property type="entry name" value="Gag_p24"/>
    <property type="match status" value="1"/>
</dbReference>
<dbReference type="Pfam" id="PF19317">
    <property type="entry name" value="Gag_p24_C"/>
    <property type="match status" value="1"/>
</dbReference>
<dbReference type="Pfam" id="PF00098">
    <property type="entry name" value="zf-CCHC"/>
    <property type="match status" value="1"/>
</dbReference>
<dbReference type="Pfam" id="PF14787">
    <property type="entry name" value="zf-CCHC_5"/>
    <property type="match status" value="1"/>
</dbReference>
<dbReference type="SMART" id="SM00343">
    <property type="entry name" value="ZnF_C2HC"/>
    <property type="match status" value="2"/>
</dbReference>
<dbReference type="SUPFAM" id="SSF47836">
    <property type="entry name" value="Retroviral matrix proteins"/>
    <property type="match status" value="1"/>
</dbReference>
<dbReference type="SUPFAM" id="SSF47353">
    <property type="entry name" value="Retrovirus capsid dimerization domain-like"/>
    <property type="match status" value="1"/>
</dbReference>
<dbReference type="SUPFAM" id="SSF47943">
    <property type="entry name" value="Retrovirus capsid protein, N-terminal core domain"/>
    <property type="match status" value="1"/>
</dbReference>
<dbReference type="SUPFAM" id="SSF57756">
    <property type="entry name" value="Retrovirus zinc finger-like domains"/>
    <property type="match status" value="2"/>
</dbReference>
<dbReference type="PROSITE" id="PS50158">
    <property type="entry name" value="ZF_CCHC"/>
    <property type="match status" value="1"/>
</dbReference>
<comment type="function">
    <text>The products of the Gag polyproteins of infectious retroviruses perform highly complex orchestrated tasks during the assembly, budding, maturation, and infection stages of the viral replication cycle. During viral assembly, the proteins form membrane associations and self-associations that ultimately result in budding of an immature virion from the infected cell. Gag precursors also function during viral assembly to selectively bind and package two plus strands of genomic RNA. Endogenous Gag proteins may have kept, lost or modified their original function during evolution.</text>
</comment>
<comment type="subcellular location">
    <subcellularLocation>
        <location>Cell membrane</location>
        <topology>Lipid-anchor</topology>
    </subcellularLocation>
    <text>Cytoplasmic membrane (in a transfection system).</text>
</comment>
<comment type="alternative products">
    <event type="ribosomal frameshifting"/>
    <isoform>
        <id>P87889-1</id>
        <name>1</name>
        <sequence type="displayed"/>
    </isoform>
    <text>This protein is synthesized as a Gag polypeptide and as a Gag-Pro-Pol polyprotein. The later is the precursor of the Pro and Pol proteins. It is thought, by similarity with type-B retroviruses, to be generated by -1 frameshifts occurring at the Gag-Pro and Pro-Pol genes boundaries.</text>
</comment>
<comment type="domain">
    <text>HERV-K Gag polyprotein contains regions homologous to the matrix (MA), capsid (CA) and nucleocapsid (NC) proteins from infectious retroviruses. Evidence suggests that HERV-K(HML-2) Gag polyprotein can be cleaved into mature MA, CA and NC under certain circumstances. However, the exact boundaries as well as the size of processed Gag proteins have not been precisely determined yet.</text>
</comment>
<comment type="PTM">
    <text evidence="1">Myristoylation is essential for retroviral assembly. Alteration of the glycine residue leads to a block in the budding of particles and an accumulation of Gag inside the cell (By similarity).</text>
</comment>
<comment type="PTM">
    <text evidence="5">Specific enzymatic cleavages may yield mature proteins.</text>
</comment>
<comment type="miscellaneous">
    <text>This Gag protein is encoded by a human specific provirus.</text>
</comment>
<comment type="miscellaneous">
    <text>Intragenic, in the sixth intron of the SCGD gene.</text>
</comment>
<comment type="similarity">
    <text evidence="5">Belongs to the beta type-B retroviral Gag protein family. HERV class-II K(HML-2) gag subfamily.</text>
</comment>
<comment type="sequence caution" evidence="5">
    <conflict type="frameshift">
        <sequence resource="EMBL-CDS" id="AAA88030"/>
    </conflict>
</comment>
<comment type="sequence caution" evidence="5">
    <conflict type="frameshift">
        <sequence resource="EMBL-CDS" id="AAA88031"/>
    </conflict>
</comment>
<comment type="sequence caution" evidence="5">
    <conflict type="frameshift">
        <sequence resource="EMBL-CDS" id="AAD51796"/>
    </conflict>
    <text>A -1 frameshift presumed to occur within the codons for the last amino acids in the Gag and Pro open reading frames.</text>
</comment>
<accession>P87889</accession>
<accession>P10263</accession>
<accession>P10264</accession>
<accession>Q69385</accession>
<accession>Q9UKH6</accession>
<feature type="initiator methionine" description="Removed" evidence="2">
    <location>
        <position position="1"/>
    </location>
</feature>
<feature type="chain" id="PRO_0000186753" description="Endogenous retrovirus group K member 10 Gag polyprotein">
    <location>
        <begin position="2"/>
        <end position="666"/>
    </location>
</feature>
<feature type="zinc finger region" description="CCHC-type 1" evidence="3">
    <location>
        <begin position="544"/>
        <end position="561"/>
    </location>
</feature>
<feature type="zinc finger region" description="CCHC-type 2" evidence="3">
    <location>
        <begin position="580"/>
        <end position="597"/>
    </location>
</feature>
<feature type="region of interest" description="Disordered" evidence="4">
    <location>
        <begin position="164"/>
        <end position="183"/>
    </location>
</feature>
<feature type="region of interest" description="Disordered" evidence="4">
    <location>
        <begin position="598"/>
        <end position="642"/>
    </location>
</feature>
<feature type="compositionally biased region" description="Polar residues" evidence="4">
    <location>
        <begin position="604"/>
        <end position="622"/>
    </location>
</feature>
<feature type="compositionally biased region" description="Low complexity" evidence="4">
    <location>
        <begin position="624"/>
        <end position="640"/>
    </location>
</feature>
<feature type="lipid moiety-binding region" description="N-myristoyl glycine" evidence="2">
    <location>
        <position position="2"/>
    </location>
</feature>
<feature type="sequence conflict" description="In Ref. 5; AC016577." evidence="5" ref="5">
    <original>S</original>
    <variation>L</variation>
    <location>
        <position position="55"/>
    </location>
</feature>
<feature type="sequence conflict" description="In Ref. 2; CAA71416." evidence="5" ref="2">
    <original>A</original>
    <variation>V</variation>
    <location>
        <position position="186"/>
    </location>
</feature>
<feature type="sequence conflict" description="In Ref. 5; AC016577." evidence="5" ref="5">
    <original>L</original>
    <variation>P</variation>
    <location>
        <position position="190"/>
    </location>
</feature>
<feature type="sequence conflict" description="In Ref. 5; AC016577." evidence="5" ref="5">
    <original>Q</original>
    <variation>P</variation>
    <location>
        <position position="207"/>
    </location>
</feature>
<feature type="sequence conflict" description="In Ref. 5; AC016577." evidence="5" ref="5">
    <original>L</original>
    <variation>P</variation>
    <location>
        <position position="215"/>
    </location>
</feature>
<feature type="sequence conflict" description="In Ref. 4; CAA51306." evidence="5" ref="4">
    <original>T</original>
    <variation>A</variation>
    <location>
        <position position="436"/>
    </location>
</feature>
<feature type="sequence conflict" description="In Ref. 4; CAA51306." evidence="5" ref="4">
    <original>G</original>
    <variation>R</variation>
    <location>
        <position position="472"/>
    </location>
</feature>
<feature type="sequence conflict" description="In Ref. 2; CAA71416." evidence="5" ref="2">
    <original>R</original>
    <variation>C</variation>
    <location>
        <position position="596"/>
    </location>
</feature>
<feature type="sequence conflict" description="In Ref. 5; AC016577." evidence="5" ref="5">
    <original>P</original>
    <variation>L</variation>
    <location>
        <position position="640"/>
    </location>
</feature>
<feature type="sequence conflict" description="In Ref. 4; CAA51306." evidence="5" ref="4">
    <original>S</original>
    <variation>L</variation>
    <location>
        <position position="659"/>
    </location>
</feature>
<protein>
    <recommendedName>
        <fullName>Endogenous retrovirus group K member 10 Gag polyprotein</fullName>
    </recommendedName>
    <alternativeName>
        <fullName>HERV-K10 Gag protein</fullName>
    </alternativeName>
    <alternativeName>
        <fullName>HERV-K107 Gag protein</fullName>
    </alternativeName>
    <alternativeName>
        <fullName>HERV-K_5q33.3 provirus ancestral Gag polyprotein</fullName>
        <shortName>Gag polyprotein</shortName>
    </alternativeName>
</protein>
<reference key="1">
    <citation type="journal article" date="1986" name="J. Virol.">
        <title>Nucleotide sequence of human endogenous retrovirus genome related to the mouse mammary tumor virus genome.</title>
        <authorList>
            <person name="Ono M."/>
            <person name="Yasunaga T."/>
            <person name="Miyata T."/>
            <person name="Ushikubo H."/>
        </authorList>
    </citation>
    <scope>NUCLEOTIDE SEQUENCE [GENOMIC DNA]</scope>
</reference>
<reference key="2">
    <citation type="journal article" date="1997" name="Virology">
        <title>Characterization of human endogenous retrovirus type K (HERV-K) virus-like particles generated from recombinant baculoviruses.</title>
        <authorList>
            <person name="Toenjes R.R."/>
            <person name="Boller K."/>
            <person name="Limbach R."/>
            <person name="Lugert R."/>
            <person name="Kurth R."/>
        </authorList>
    </citation>
    <scope>NUCLEOTIDE SEQUENCE [GENOMIC DNA]</scope>
</reference>
<reference key="3">
    <citation type="journal article" date="1999" name="Curr. Biol.">
        <title>Many human endogenous retrovirus K (HERV-K) proviruses are unique to humans.</title>
        <authorList>
            <person name="Barbulescu M."/>
            <person name="Turner G."/>
            <person name="Seaman M.I."/>
            <person name="Deinard A.S."/>
            <person name="Kidd K.K."/>
            <person name="Lenz J."/>
        </authorList>
    </citation>
    <scope>NUCLEOTIDE SEQUENCE [GENOMIC DNA]</scope>
</reference>
<reference key="4">
    <citation type="journal article" date="1993" name="Proc. Natl. Acad. Sci. U.S.A.">
        <title>Identification of human endogenous retroviruses with complex mRNA expression and particle formation.</title>
        <authorList>
            <person name="Loewer R."/>
            <person name="Boller K."/>
            <person name="Hasenmaier B."/>
            <person name="Korbmacher C."/>
            <person name="Mueller-Lantzsch N."/>
            <person name="Loewer J."/>
            <person name="Kurth R."/>
        </authorList>
    </citation>
    <scope>NUCLEOTIDE SEQUENCE [MRNA]</scope>
</reference>
<reference key="5">
    <citation type="journal article" date="2004" name="Nature">
        <title>The DNA sequence and comparative analysis of human chromosome 5.</title>
        <authorList>
            <person name="Schmutz J."/>
            <person name="Martin J."/>
            <person name="Terry A."/>
            <person name="Couronne O."/>
            <person name="Grimwood J."/>
            <person name="Lowry S."/>
            <person name="Gordon L.A."/>
            <person name="Scott D."/>
            <person name="Xie G."/>
            <person name="Huang W."/>
            <person name="Hellsten U."/>
            <person name="Tran-Gyamfi M."/>
            <person name="She X."/>
            <person name="Prabhakar S."/>
            <person name="Aerts A."/>
            <person name="Altherr M."/>
            <person name="Bajorek E."/>
            <person name="Black S."/>
            <person name="Branscomb E."/>
            <person name="Caoile C."/>
            <person name="Challacombe J.F."/>
            <person name="Chan Y.M."/>
            <person name="Denys M."/>
            <person name="Detter J.C."/>
            <person name="Escobar J."/>
            <person name="Flowers D."/>
            <person name="Fotopulos D."/>
            <person name="Glavina T."/>
            <person name="Gomez M."/>
            <person name="Gonzales E."/>
            <person name="Goodstein D."/>
            <person name="Grigoriev I."/>
            <person name="Groza M."/>
            <person name="Hammon N."/>
            <person name="Hawkins T."/>
            <person name="Haydu L."/>
            <person name="Israni S."/>
            <person name="Jett J."/>
            <person name="Kadner K."/>
            <person name="Kimball H."/>
            <person name="Kobayashi A."/>
            <person name="Lopez F."/>
            <person name="Lou Y."/>
            <person name="Martinez D."/>
            <person name="Medina C."/>
            <person name="Morgan J."/>
            <person name="Nandkeshwar R."/>
            <person name="Noonan J.P."/>
            <person name="Pitluck S."/>
            <person name="Pollard M."/>
            <person name="Predki P."/>
            <person name="Priest J."/>
            <person name="Ramirez L."/>
            <person name="Retterer J."/>
            <person name="Rodriguez A."/>
            <person name="Rogers S."/>
            <person name="Salamov A."/>
            <person name="Salazar A."/>
            <person name="Thayer N."/>
            <person name="Tice H."/>
            <person name="Tsai M."/>
            <person name="Ustaszewska A."/>
            <person name="Vo N."/>
            <person name="Wheeler J."/>
            <person name="Wu K."/>
            <person name="Yang J."/>
            <person name="Dickson M."/>
            <person name="Cheng J.-F."/>
            <person name="Eichler E.E."/>
            <person name="Olsen A."/>
            <person name="Pennacchio L.A."/>
            <person name="Rokhsar D.S."/>
            <person name="Richardson P."/>
            <person name="Lucas S.M."/>
            <person name="Myers R.M."/>
            <person name="Rubin E.M."/>
        </authorList>
    </citation>
    <scope>NUCLEOTIDE SEQUENCE [LARGE SCALE GENOMIC DNA]</scope>
</reference>
<reference key="6">
    <citation type="journal article" date="1995" name="J. Virol.">
        <title>Human endogenous retrovirus K10: expression of Gag protein and detection of antibodies in patients with seminomas.</title>
        <authorList>
            <person name="Sauter M."/>
            <person name="Schommer S."/>
            <person name="Kremmer E."/>
            <person name="Remberger K."/>
            <person name="Doelken G."/>
            <person name="Lemm I."/>
            <person name="Buck M."/>
            <person name="Best B."/>
            <person name="Neumann-Haefelin D."/>
            <person name="Mueller-Lantzsch N."/>
        </authorList>
    </citation>
    <scope>CHARACTERIZATION</scope>
</reference>
<keyword id="KW-1003">Cell membrane</keyword>
<keyword id="KW-0895">ERV</keyword>
<keyword id="KW-0449">Lipoprotein</keyword>
<keyword id="KW-0472">Membrane</keyword>
<keyword id="KW-0479">Metal-binding</keyword>
<keyword id="KW-0519">Myristate</keyword>
<keyword id="KW-1185">Reference proteome</keyword>
<keyword id="KW-0677">Repeat</keyword>
<keyword id="KW-0688">Ribosomal frameshifting</keyword>
<keyword id="KW-0814">Transposable element</keyword>
<keyword id="KW-0862">Zinc</keyword>
<keyword id="KW-0863">Zinc-finger</keyword>